<keyword id="KW-0687">Ribonucleoprotein</keyword>
<keyword id="KW-0689">Ribosomal protein</keyword>
<accession>A6U3V7</accession>
<gene>
    <name evidence="1" type="primary">rpmD</name>
    <name type="ordered locus">SaurJH1_2300</name>
</gene>
<protein>
    <recommendedName>
        <fullName evidence="1">Large ribosomal subunit protein uL30</fullName>
    </recommendedName>
    <alternativeName>
        <fullName evidence="2">50S ribosomal protein L30</fullName>
    </alternativeName>
</protein>
<comment type="subunit">
    <text evidence="1">Part of the 50S ribosomal subunit.</text>
</comment>
<comment type="similarity">
    <text evidence="1">Belongs to the universal ribosomal protein uL30 family.</text>
</comment>
<sequence length="59" mass="6554">MAKLQITLTRSVIGRPETQRKTVEALGLKKTNSSVVVEDNPAIRGQINKVKHLVTVEEK</sequence>
<name>RL30_STAA2</name>
<feature type="chain" id="PRO_1000087267" description="Large ribosomal subunit protein uL30">
    <location>
        <begin position="1"/>
        <end position="59"/>
    </location>
</feature>
<proteinExistence type="inferred from homology"/>
<organism>
    <name type="scientific">Staphylococcus aureus (strain JH1)</name>
    <dbReference type="NCBI Taxonomy" id="359787"/>
    <lineage>
        <taxon>Bacteria</taxon>
        <taxon>Bacillati</taxon>
        <taxon>Bacillota</taxon>
        <taxon>Bacilli</taxon>
        <taxon>Bacillales</taxon>
        <taxon>Staphylococcaceae</taxon>
        <taxon>Staphylococcus</taxon>
    </lineage>
</organism>
<dbReference type="EMBL" id="CP000736">
    <property type="protein sequence ID" value="ABR53125.1"/>
    <property type="molecule type" value="Genomic_DNA"/>
</dbReference>
<dbReference type="SMR" id="A6U3V7"/>
<dbReference type="KEGG" id="sah:SaurJH1_2300"/>
<dbReference type="HOGENOM" id="CLU_131047_2_1_9"/>
<dbReference type="GO" id="GO:0022625">
    <property type="term" value="C:cytosolic large ribosomal subunit"/>
    <property type="evidence" value="ECO:0007669"/>
    <property type="project" value="TreeGrafter"/>
</dbReference>
<dbReference type="GO" id="GO:0003735">
    <property type="term" value="F:structural constituent of ribosome"/>
    <property type="evidence" value="ECO:0007669"/>
    <property type="project" value="InterPro"/>
</dbReference>
<dbReference type="GO" id="GO:0006412">
    <property type="term" value="P:translation"/>
    <property type="evidence" value="ECO:0007669"/>
    <property type="project" value="UniProtKB-UniRule"/>
</dbReference>
<dbReference type="CDD" id="cd01658">
    <property type="entry name" value="Ribosomal_L30"/>
    <property type="match status" value="1"/>
</dbReference>
<dbReference type="FunFam" id="3.30.1390.20:FF:000001">
    <property type="entry name" value="50S ribosomal protein L30"/>
    <property type="match status" value="1"/>
</dbReference>
<dbReference type="Gene3D" id="3.30.1390.20">
    <property type="entry name" value="Ribosomal protein L30, ferredoxin-like fold domain"/>
    <property type="match status" value="1"/>
</dbReference>
<dbReference type="HAMAP" id="MF_01371_B">
    <property type="entry name" value="Ribosomal_uL30_B"/>
    <property type="match status" value="1"/>
</dbReference>
<dbReference type="InterPro" id="IPR036919">
    <property type="entry name" value="Ribo_uL30_ferredoxin-like_sf"/>
</dbReference>
<dbReference type="InterPro" id="IPR005996">
    <property type="entry name" value="Ribosomal_uL30_bac-type"/>
</dbReference>
<dbReference type="InterPro" id="IPR016082">
    <property type="entry name" value="Ribosomal_uL30_ferredoxin-like"/>
</dbReference>
<dbReference type="NCBIfam" id="TIGR01308">
    <property type="entry name" value="rpmD_bact"/>
    <property type="match status" value="1"/>
</dbReference>
<dbReference type="PANTHER" id="PTHR15892:SF2">
    <property type="entry name" value="LARGE RIBOSOMAL SUBUNIT PROTEIN UL30M"/>
    <property type="match status" value="1"/>
</dbReference>
<dbReference type="PANTHER" id="PTHR15892">
    <property type="entry name" value="MITOCHONDRIAL RIBOSOMAL PROTEIN L30"/>
    <property type="match status" value="1"/>
</dbReference>
<dbReference type="Pfam" id="PF00327">
    <property type="entry name" value="Ribosomal_L30"/>
    <property type="match status" value="1"/>
</dbReference>
<dbReference type="PIRSF" id="PIRSF002211">
    <property type="entry name" value="Ribosomal_L30_bac-type"/>
    <property type="match status" value="1"/>
</dbReference>
<dbReference type="SUPFAM" id="SSF55129">
    <property type="entry name" value="Ribosomal protein L30p/L7e"/>
    <property type="match status" value="1"/>
</dbReference>
<evidence type="ECO:0000255" key="1">
    <source>
        <dbReference type="HAMAP-Rule" id="MF_01371"/>
    </source>
</evidence>
<evidence type="ECO:0000305" key="2"/>
<reference key="1">
    <citation type="submission" date="2007-06" db="EMBL/GenBank/DDBJ databases">
        <title>Complete sequence of chromosome of Staphylococcus aureus subsp. aureus JH1.</title>
        <authorList>
            <consortium name="US DOE Joint Genome Institute"/>
            <person name="Copeland A."/>
            <person name="Lucas S."/>
            <person name="Lapidus A."/>
            <person name="Barry K."/>
            <person name="Detter J.C."/>
            <person name="Glavina del Rio T."/>
            <person name="Hammon N."/>
            <person name="Israni S."/>
            <person name="Dalin E."/>
            <person name="Tice H."/>
            <person name="Pitluck S."/>
            <person name="Chain P."/>
            <person name="Malfatti S."/>
            <person name="Shin M."/>
            <person name="Vergez L."/>
            <person name="Schmutz J."/>
            <person name="Larimer F."/>
            <person name="Land M."/>
            <person name="Hauser L."/>
            <person name="Kyrpides N."/>
            <person name="Ivanova N."/>
            <person name="Tomasz A."/>
            <person name="Richardson P."/>
        </authorList>
    </citation>
    <scope>NUCLEOTIDE SEQUENCE [LARGE SCALE GENOMIC DNA]</scope>
    <source>
        <strain>JH1</strain>
    </source>
</reference>